<reference key="1">
    <citation type="journal article" date="1995" name="Curr. Genet.">
        <title>Organisation of the mitochondrial genome of Trichophyton rubrum. DNA sequence analysis of the ND4 gene, the ATPase subunit-6 gene, the ribosomal RNA small-subunit gene, the ND6 gene, the COXIII gene, the ATPase subunit-8 gene and six tRNA genes that correspond respectively to the tyrosine, lysine, glutamine, asparagine, isoleucine and tryptophan isoacceptors.</title>
        <authorList>
            <person name="de Bievre C."/>
            <person name="Dujon B."/>
        </authorList>
    </citation>
    <scope>NUCLEOTIDE SEQUENCE [GENOMIC DNA]</scope>
    <source>
        <strain>IP 1817.89</strain>
    </source>
</reference>
<dbReference type="EC" id="7.1.1.9"/>
<dbReference type="EMBL" id="X88896">
    <property type="protein sequence ID" value="CAA61357.1"/>
    <property type="molecule type" value="Genomic_DNA"/>
</dbReference>
<dbReference type="PIR" id="S65034">
    <property type="entry name" value="S65034"/>
</dbReference>
<dbReference type="SMR" id="Q36837"/>
<dbReference type="GO" id="GO:0005743">
    <property type="term" value="C:mitochondrial inner membrane"/>
    <property type="evidence" value="ECO:0007669"/>
    <property type="project" value="UniProtKB-SubCell"/>
</dbReference>
<dbReference type="GO" id="GO:0004129">
    <property type="term" value="F:cytochrome-c oxidase activity"/>
    <property type="evidence" value="ECO:0007669"/>
    <property type="project" value="UniProtKB-EC"/>
</dbReference>
<dbReference type="GO" id="GO:0006123">
    <property type="term" value="P:mitochondrial electron transport, cytochrome c to oxygen"/>
    <property type="evidence" value="ECO:0007669"/>
    <property type="project" value="TreeGrafter"/>
</dbReference>
<dbReference type="CDD" id="cd01665">
    <property type="entry name" value="Cyt_c_Oxidase_III"/>
    <property type="match status" value="1"/>
</dbReference>
<dbReference type="FunFam" id="1.10.287.70:FF:000082">
    <property type="entry name" value="Cytochrome c oxidase subunit 3"/>
    <property type="match status" value="1"/>
</dbReference>
<dbReference type="FunFam" id="1.20.120.80:FF:000002">
    <property type="entry name" value="Cytochrome c oxidase subunit 3"/>
    <property type="match status" value="1"/>
</dbReference>
<dbReference type="Gene3D" id="1.10.287.70">
    <property type="match status" value="1"/>
</dbReference>
<dbReference type="Gene3D" id="1.20.120.80">
    <property type="entry name" value="Cytochrome c oxidase, subunit III, four-helix bundle"/>
    <property type="match status" value="1"/>
</dbReference>
<dbReference type="InterPro" id="IPR024791">
    <property type="entry name" value="Cyt_c/ubiquinol_Oxase_su3"/>
</dbReference>
<dbReference type="InterPro" id="IPR033945">
    <property type="entry name" value="Cyt_c_oxase_su3_dom"/>
</dbReference>
<dbReference type="InterPro" id="IPR000298">
    <property type="entry name" value="Cyt_c_oxidase-like_su3"/>
</dbReference>
<dbReference type="InterPro" id="IPR035973">
    <property type="entry name" value="Cyt_c_oxidase_su3-like_sf"/>
</dbReference>
<dbReference type="InterPro" id="IPR013833">
    <property type="entry name" value="Cyt_c_oxidase_su3_a-hlx"/>
</dbReference>
<dbReference type="PANTHER" id="PTHR11403:SF7">
    <property type="entry name" value="CYTOCHROME C OXIDASE SUBUNIT 3"/>
    <property type="match status" value="1"/>
</dbReference>
<dbReference type="PANTHER" id="PTHR11403">
    <property type="entry name" value="CYTOCHROME C OXIDASE SUBUNIT III"/>
    <property type="match status" value="1"/>
</dbReference>
<dbReference type="Pfam" id="PF00510">
    <property type="entry name" value="COX3"/>
    <property type="match status" value="1"/>
</dbReference>
<dbReference type="SUPFAM" id="SSF81452">
    <property type="entry name" value="Cytochrome c oxidase subunit III-like"/>
    <property type="match status" value="1"/>
</dbReference>
<dbReference type="PROSITE" id="PS50253">
    <property type="entry name" value="COX3"/>
    <property type="match status" value="1"/>
</dbReference>
<keyword id="KW-0472">Membrane</keyword>
<keyword id="KW-0496">Mitochondrion</keyword>
<keyword id="KW-0999">Mitochondrion inner membrane</keyword>
<keyword id="KW-1278">Translocase</keyword>
<keyword id="KW-0812">Transmembrane</keyword>
<keyword id="KW-1133">Transmembrane helix</keyword>
<organism>
    <name type="scientific">Trichophyton rubrum</name>
    <name type="common">Athlete's foot fungus</name>
    <name type="synonym">Epidermophyton rubrum</name>
    <dbReference type="NCBI Taxonomy" id="5551"/>
    <lineage>
        <taxon>Eukaryota</taxon>
        <taxon>Fungi</taxon>
        <taxon>Dikarya</taxon>
        <taxon>Ascomycota</taxon>
        <taxon>Pezizomycotina</taxon>
        <taxon>Eurotiomycetes</taxon>
        <taxon>Eurotiomycetidae</taxon>
        <taxon>Onygenales</taxon>
        <taxon>Arthrodermataceae</taxon>
        <taxon>Trichophyton</taxon>
    </lineage>
</organism>
<protein>
    <recommendedName>
        <fullName>Cytochrome c oxidase subunit 3</fullName>
        <ecNumber>7.1.1.9</ecNumber>
    </recommendedName>
    <alternativeName>
        <fullName>Cytochrome c oxidase polypeptide III</fullName>
    </alternativeName>
</protein>
<sequence length="269" mass="30599">MSLYQRTNFQSHPYHLVWPSPWPFYNSLSLFILTTSGVLTMHGFSNMYIILFIAFINLVWCMTLWFRDIISEGTYLGNHTNAVQRGLNLGVGLFIASEALFFLAIFWTFFHSSLSPNVELGAQWPPLGIKAIDPFELPLLNNIILLSSGVTVNSNYHSLIQGNRKGALYGLVATILLAIVFTIFQGIEYSVSSFTISDGVYGSCFYFSTGFHGFHVLIGTAFLSVGLWRLLGYHLTDHHHLGYESGILYWHFVDVVWLILYVCIYFWGY</sequence>
<name>COX3_TRIRU</name>
<proteinExistence type="inferred from homology"/>
<feature type="chain" id="PRO_0000183868" description="Cytochrome c oxidase subunit 3">
    <location>
        <begin position="1"/>
        <end position="269"/>
    </location>
</feature>
<feature type="transmembrane region" description="Helical" evidence="2">
    <location>
        <begin position="24"/>
        <end position="44"/>
    </location>
</feature>
<feature type="transmembrane region" description="Helical" evidence="2">
    <location>
        <begin position="46"/>
        <end position="66"/>
    </location>
</feature>
<feature type="transmembrane region" description="Helical" evidence="2">
    <location>
        <begin position="90"/>
        <end position="110"/>
    </location>
</feature>
<feature type="transmembrane region" description="Helical" evidence="2">
    <location>
        <begin position="132"/>
        <end position="152"/>
    </location>
</feature>
<feature type="transmembrane region" description="Helical" evidence="2">
    <location>
        <begin position="167"/>
        <end position="187"/>
    </location>
</feature>
<feature type="transmembrane region" description="Helical" evidence="2">
    <location>
        <begin position="207"/>
        <end position="227"/>
    </location>
</feature>
<feature type="transmembrane region" description="Helical" evidence="2">
    <location>
        <begin position="247"/>
        <end position="267"/>
    </location>
</feature>
<evidence type="ECO:0000250" key="1">
    <source>
        <dbReference type="UniProtKB" id="P00420"/>
    </source>
</evidence>
<evidence type="ECO:0000255" key="2"/>
<evidence type="ECO:0000305" key="3"/>
<geneLocation type="mitochondrion"/>
<gene>
    <name type="primary">COXIII</name>
</gene>
<comment type="function">
    <text evidence="1">Component of the cytochrome c oxidase, the last enzyme in the mitochondrial electron transport chain which drives oxidative phosphorylation. The respiratory chain contains 3 multisubunit complexes succinate dehydrogenase (complex II, CII), ubiquinol-cytochrome c oxidoreductase (cytochrome b-c1 complex, complex III, CIII) and cytochrome c oxidase (complex IV, CIV), that cooperate to transfer electrons derived from NADH and succinate to molecular oxygen, creating an electrochemical gradient over the inner membrane that drives transmembrane transport and the ATP synthase. Cytochrome c oxidase is the component of the respiratory chain that catalyzes the reduction of oxygen to water. Electrons originating from reduced cytochrome c in the intermembrane space (IMS) are transferred via the dinuclear copper A center (CU(A)) of subunit 2 and heme A of subunit 1 to the active site in subunit 1, a binuclear center (BNC) formed by heme A3 and copper B (CU(B)). The BNC reduces molecular oxygen to 2 water molecules using 4 electrons from cytochrome c in the IMS and 4 protons from the mitochondrial matrix.</text>
</comment>
<comment type="catalytic activity">
    <reaction evidence="1">
        <text>4 Fe(II)-[cytochrome c] + O2 + 8 H(+)(in) = 4 Fe(III)-[cytochrome c] + 2 H2O + 4 H(+)(out)</text>
        <dbReference type="Rhea" id="RHEA:11436"/>
        <dbReference type="Rhea" id="RHEA-COMP:10350"/>
        <dbReference type="Rhea" id="RHEA-COMP:14399"/>
        <dbReference type="ChEBI" id="CHEBI:15377"/>
        <dbReference type="ChEBI" id="CHEBI:15378"/>
        <dbReference type="ChEBI" id="CHEBI:15379"/>
        <dbReference type="ChEBI" id="CHEBI:29033"/>
        <dbReference type="ChEBI" id="CHEBI:29034"/>
        <dbReference type="EC" id="7.1.1.9"/>
    </reaction>
    <physiologicalReaction direction="left-to-right" evidence="1">
        <dbReference type="Rhea" id="RHEA:11437"/>
    </physiologicalReaction>
</comment>
<comment type="subunit">
    <text evidence="1">Component of the cytochrome c oxidase (complex IV, CIV), a multisubunit enzyme composed of a catalytic core of 3 subunits and several supernumerary subunits. The complex exists as a monomer or a dimer and forms supercomplexes (SCs) in the inner mitochondrial membrane with ubiquinol-cytochrome c oxidoreductase (cytochrome b-c1 complex, complex III, CIII).</text>
</comment>
<comment type="subcellular location">
    <subcellularLocation>
        <location evidence="1">Mitochondrion inner membrane</location>
        <topology evidence="1">Multi-pass membrane protein</topology>
    </subcellularLocation>
</comment>
<comment type="similarity">
    <text evidence="3">Belongs to the cytochrome c oxidase subunit 3 family.</text>
</comment>
<accession>Q36837</accession>